<feature type="signal peptide" evidence="1">
    <location>
        <begin position="1"/>
        <end position="21"/>
    </location>
</feature>
<feature type="chain" id="PRO_0000316089" description="Beta-cardiotoxin CTX27" evidence="4">
    <location>
        <begin position="22"/>
        <end position="84"/>
    </location>
</feature>
<feature type="disulfide bond" evidence="2 5">
    <location>
        <begin position="24"/>
        <end position="43"/>
    </location>
</feature>
<feature type="disulfide bond" evidence="2 5">
    <location>
        <begin position="36"/>
        <end position="61"/>
    </location>
</feature>
<feature type="disulfide bond" evidence="2 5">
    <location>
        <begin position="65"/>
        <end position="76"/>
    </location>
</feature>
<feature type="disulfide bond" evidence="2 5">
    <location>
        <begin position="77"/>
        <end position="82"/>
    </location>
</feature>
<feature type="strand" evidence="6">
    <location>
        <begin position="23"/>
        <end position="25"/>
    </location>
</feature>
<feature type="strand" evidence="6">
    <location>
        <begin position="27"/>
        <end position="31"/>
    </location>
</feature>
<feature type="strand" evidence="6">
    <location>
        <begin position="33"/>
        <end position="35"/>
    </location>
</feature>
<feature type="strand" evidence="6">
    <location>
        <begin position="42"/>
        <end position="50"/>
    </location>
</feature>
<feature type="strand" evidence="6">
    <location>
        <begin position="58"/>
        <end position="64"/>
    </location>
</feature>
<feature type="strand" evidence="6">
    <location>
        <begin position="73"/>
        <end position="77"/>
    </location>
</feature>
<evidence type="ECO:0000269" key="1">
    <source>
    </source>
</evidence>
<evidence type="ECO:0000269" key="2">
    <source ref="4"/>
</evidence>
<evidence type="ECO:0000305" key="3"/>
<evidence type="ECO:0000305" key="4">
    <source>
    </source>
</evidence>
<evidence type="ECO:0000312" key="5">
    <source>
        <dbReference type="PDB" id="3PLC"/>
    </source>
</evidence>
<evidence type="ECO:0007829" key="6">
    <source>
        <dbReference type="PDB" id="3PLC"/>
    </source>
</evidence>
<organism>
    <name type="scientific">Ophiophagus hannah</name>
    <name type="common">King cobra</name>
    <name type="synonym">Naja hannah</name>
    <dbReference type="NCBI Taxonomy" id="8665"/>
    <lineage>
        <taxon>Eukaryota</taxon>
        <taxon>Metazoa</taxon>
        <taxon>Chordata</taxon>
        <taxon>Craniata</taxon>
        <taxon>Vertebrata</taxon>
        <taxon>Euteleostomi</taxon>
        <taxon>Lepidosauria</taxon>
        <taxon>Squamata</taxon>
        <taxon>Bifurcata</taxon>
        <taxon>Unidentata</taxon>
        <taxon>Episquamata</taxon>
        <taxon>Toxicofera</taxon>
        <taxon>Serpentes</taxon>
        <taxon>Colubroidea</taxon>
        <taxon>Elapidae</taxon>
        <taxon>Elapinae</taxon>
        <taxon>Ophiophagus</taxon>
    </lineage>
</organism>
<accession>Q69CK0</accession>
<sequence>MKTLLLTLVVVTIVCLDLGYTRKCLNTPLPLIYTTCPIGQDKCVKMTIKKLPSKYDVIRGCIDICPKSSADVEVLCCDTNKCNK</sequence>
<dbReference type="EMBL" id="AY596935">
    <property type="protein sequence ID" value="AAT97257.1"/>
    <property type="molecule type" value="mRNA"/>
</dbReference>
<dbReference type="EMBL" id="AY354198">
    <property type="protein sequence ID" value="AAR10440.1"/>
    <property type="molecule type" value="mRNA"/>
</dbReference>
<dbReference type="PDB" id="3PLC">
    <property type="method" value="X-ray"/>
    <property type="resolution" value="2.41 A"/>
    <property type="chains" value="A/B/C=22-84"/>
</dbReference>
<dbReference type="PDBsum" id="3PLC"/>
<dbReference type="SMR" id="Q69CK0"/>
<dbReference type="TopDownProteomics" id="Q69CK0"/>
<dbReference type="EvolutionaryTrace" id="Q69CK0"/>
<dbReference type="GO" id="GO:0005576">
    <property type="term" value="C:extracellular region"/>
    <property type="evidence" value="ECO:0007669"/>
    <property type="project" value="UniProtKB-SubCell"/>
</dbReference>
<dbReference type="GO" id="GO:0090729">
    <property type="term" value="F:toxin activity"/>
    <property type="evidence" value="ECO:0007669"/>
    <property type="project" value="UniProtKB-KW"/>
</dbReference>
<dbReference type="CDD" id="cd00206">
    <property type="entry name" value="TFP_snake_toxin"/>
    <property type="match status" value="1"/>
</dbReference>
<dbReference type="FunFam" id="2.10.60.10:FF:000024">
    <property type="entry name" value="Cytotoxin 1"/>
    <property type="match status" value="1"/>
</dbReference>
<dbReference type="Gene3D" id="2.10.60.10">
    <property type="entry name" value="CD59"/>
    <property type="match status" value="1"/>
</dbReference>
<dbReference type="InterPro" id="IPR003572">
    <property type="entry name" value="Cytotoxin_Cobra"/>
</dbReference>
<dbReference type="InterPro" id="IPR003571">
    <property type="entry name" value="Snake_3FTx"/>
</dbReference>
<dbReference type="InterPro" id="IPR045860">
    <property type="entry name" value="Snake_toxin-like_sf"/>
</dbReference>
<dbReference type="InterPro" id="IPR018354">
    <property type="entry name" value="Snake_toxin_con_site"/>
</dbReference>
<dbReference type="InterPro" id="IPR054131">
    <property type="entry name" value="Toxin_cobra-type"/>
</dbReference>
<dbReference type="Pfam" id="PF21947">
    <property type="entry name" value="Toxin_cobra-type"/>
    <property type="match status" value="1"/>
</dbReference>
<dbReference type="PRINTS" id="PR00282">
    <property type="entry name" value="CYTOTOXIN"/>
</dbReference>
<dbReference type="SUPFAM" id="SSF57302">
    <property type="entry name" value="Snake toxin-like"/>
    <property type="match status" value="1"/>
</dbReference>
<dbReference type="PROSITE" id="PS00272">
    <property type="entry name" value="SNAKE_TOXIN"/>
    <property type="match status" value="1"/>
</dbReference>
<protein>
    <recommendedName>
        <fullName>Beta-cardiotoxin CTX27</fullName>
    </recommendedName>
    <alternativeName>
        <fullName>OH-27</fullName>
    </alternativeName>
</protein>
<proteinExistence type="evidence at protein level"/>
<name>3SDC7_OPHHA</name>
<reference key="1">
    <citation type="journal article" date="2004" name="Toxicon">
        <title>Cloning and purification of alpha-neurotoxins from king cobra (Ophiophagus hannah).</title>
        <authorList>
            <person name="He Y.-Y."/>
            <person name="Lee W.-H."/>
            <person name="Zhang Y."/>
        </authorList>
    </citation>
    <scope>NUCLEOTIDE SEQUENCE [MRNA]</scope>
    <source>
        <tissue>Venom gland</tissue>
    </source>
</reference>
<reference key="2">
    <citation type="journal article" date="2007" name="FASEB J.">
        <title>Beta-cardiotoxin: a new three-finger toxin from Ophiophagus hannah (king cobra) venom with beta-blocker activity.</title>
        <authorList>
            <person name="Rajagopalan N."/>
            <person name="Pung Y.F."/>
            <person name="Zhu Y.Z."/>
            <person name="Wong P.T.H."/>
            <person name="Kumar P.P."/>
            <person name="Kini R.M."/>
        </authorList>
    </citation>
    <scope>NUCLEOTIDE SEQUENCE [MRNA]</scope>
    <scope>PROTEIN SEQUENCE OF 22-51</scope>
    <scope>FUNCTION</scope>
    <scope>MASS SPECTROMETRY</scope>
    <scope>SUBCELLULAR LOCATION</scope>
    <source>
        <tissue>Venom</tissue>
        <tissue>Venom gland</tissue>
    </source>
</reference>
<reference key="3">
    <citation type="journal article" date="2013" name="Proc. Natl. Acad. Sci. U.S.A.">
        <title>The king cobra genome reveals dynamic gene evolution and adaptation in the snake venom system.</title>
        <authorList>
            <person name="Vonk F.J."/>
            <person name="Casewell N.R."/>
            <person name="Henkel C.V."/>
            <person name="Heimberg A.M."/>
            <person name="Jansen H.J."/>
            <person name="McCleary R.J."/>
            <person name="Kerkkamp H.M."/>
            <person name="Vos R.A."/>
            <person name="Guerreiro I."/>
            <person name="Calvete J.J."/>
            <person name="Wuster W."/>
            <person name="Woods A.E."/>
            <person name="Logan J.M."/>
            <person name="Harrison R.A."/>
            <person name="Castoe T.A."/>
            <person name="de Koning A.P."/>
            <person name="Pollock D.D."/>
            <person name="Yandell M."/>
            <person name="Calderon D."/>
            <person name="Renjifo C."/>
            <person name="Currier R.B."/>
            <person name="Salgado D."/>
            <person name="Pla D."/>
            <person name="Sanz L."/>
            <person name="Hyder A.S."/>
            <person name="Ribeiro J.M."/>
            <person name="Arntzen J.W."/>
            <person name="van den Thillart G.E."/>
            <person name="Boetzer M."/>
            <person name="Pirovano W."/>
            <person name="Dirks R.P."/>
            <person name="Spaink H.P."/>
            <person name="Duboule D."/>
            <person name="McGlinn E."/>
            <person name="Kini R.M."/>
            <person name="Richardson M.K."/>
        </authorList>
    </citation>
    <scope>IDENTIFICATION BY MASS SPECTROMETRY</scope>
    <source>
        <tissue>Venom</tissue>
    </source>
</reference>
<reference key="4">
    <citation type="submission" date="2010-11" db="PDB data bank">
        <title>Crystal structure of beta-cardiotoxin, a novel three- cardiotoxin from the venom of Ophiophagus hannah.</title>
        <authorList>
            <person name="Roy A."/>
            <person name="Qingxiang S."/>
            <person name="Kini R.M."/>
            <person name="Sivaraman J."/>
        </authorList>
    </citation>
    <scope>X-RAY CRYSTALLOGRAPHY (2.41 ANGSTROMS) OF 22-84</scope>
    <scope>DISULFIDE BONDS</scope>
</reference>
<keyword id="KW-0002">3D-structure</keyword>
<keyword id="KW-0123">Cardiotoxin</keyword>
<keyword id="KW-0903">Direct protein sequencing</keyword>
<keyword id="KW-1015">Disulfide bond</keyword>
<keyword id="KW-1213">G-protein coupled receptor impairing toxin</keyword>
<keyword id="KW-0964">Secreted</keyword>
<keyword id="KW-0732">Signal</keyword>
<keyword id="KW-0800">Toxin</keyword>
<comment type="function">
    <text evidence="1">Acts as a beta-blocker by binding to beta-1 and beta-2 adrenergic receptors (ADRB1 and ADRB2). It dose-dependently decreases the heart rate (bradycardia), whereas conventional cardiotoxins increases it. At 100 mg/kg, intraperitoneal injection into mice provokes labored breathing, impaired locomotion, lack of response to external stimuli, and death (after 30 minutes).</text>
</comment>
<comment type="subcellular location">
    <subcellularLocation>
        <location evidence="1">Secreted</location>
    </subcellularLocation>
</comment>
<comment type="tissue specificity">
    <text evidence="3">Expressed by the venom gland.</text>
</comment>
<comment type="mass spectrometry"/>
<comment type="miscellaneous">
    <text evidence="1">Negative results: does not affect blood coagulation and does not show significant hemolytic activity.</text>
</comment>
<comment type="miscellaneous">
    <text evidence="3">Is classified as a P-type cytotoxin, since a proline residue stands at position 52 (Pro-31 in standard classification).</text>
</comment>
<comment type="similarity">
    <text evidence="3">Belongs to the three-finger toxin family. Short-chain subfamily. Aminergic toxin sub-subfamily.</text>
</comment>